<organism>
    <name type="scientific">Bifidobacterium longum (strain DJO10A)</name>
    <dbReference type="NCBI Taxonomy" id="205913"/>
    <lineage>
        <taxon>Bacteria</taxon>
        <taxon>Bacillati</taxon>
        <taxon>Actinomycetota</taxon>
        <taxon>Actinomycetes</taxon>
        <taxon>Bifidobacteriales</taxon>
        <taxon>Bifidobacteriaceae</taxon>
        <taxon>Bifidobacterium</taxon>
    </lineage>
</organism>
<dbReference type="EMBL" id="CP000605">
    <property type="protein sequence ID" value="ACD99125.1"/>
    <property type="molecule type" value="Genomic_DNA"/>
</dbReference>
<dbReference type="RefSeq" id="WP_007053013.1">
    <property type="nucleotide sequence ID" value="NZ_AABM02000021.1"/>
</dbReference>
<dbReference type="SMR" id="B3DPY6"/>
<dbReference type="GeneID" id="69578917"/>
<dbReference type="KEGG" id="blj:BLD_1680"/>
<dbReference type="HOGENOM" id="CLU_190949_0_2_11"/>
<dbReference type="Proteomes" id="UP000002419">
    <property type="component" value="Chromosome"/>
</dbReference>
<dbReference type="GO" id="GO:0005737">
    <property type="term" value="C:cytoplasm"/>
    <property type="evidence" value="ECO:0007669"/>
    <property type="project" value="UniProtKB-ARBA"/>
</dbReference>
<dbReference type="GO" id="GO:1990904">
    <property type="term" value="C:ribonucleoprotein complex"/>
    <property type="evidence" value="ECO:0007669"/>
    <property type="project" value="UniProtKB-KW"/>
</dbReference>
<dbReference type="GO" id="GO:0005840">
    <property type="term" value="C:ribosome"/>
    <property type="evidence" value="ECO:0007669"/>
    <property type="project" value="UniProtKB-KW"/>
</dbReference>
<dbReference type="GO" id="GO:0003735">
    <property type="term" value="F:structural constituent of ribosome"/>
    <property type="evidence" value="ECO:0007669"/>
    <property type="project" value="InterPro"/>
</dbReference>
<dbReference type="GO" id="GO:0006412">
    <property type="term" value="P:translation"/>
    <property type="evidence" value="ECO:0007669"/>
    <property type="project" value="UniProtKB-UniRule"/>
</dbReference>
<dbReference type="Gene3D" id="2.20.28.120">
    <property type="entry name" value="Ribosomal protein L33"/>
    <property type="match status" value="1"/>
</dbReference>
<dbReference type="HAMAP" id="MF_00294">
    <property type="entry name" value="Ribosomal_bL33"/>
    <property type="match status" value="1"/>
</dbReference>
<dbReference type="InterPro" id="IPR001705">
    <property type="entry name" value="Ribosomal_bL33"/>
</dbReference>
<dbReference type="InterPro" id="IPR018264">
    <property type="entry name" value="Ribosomal_bL33_CS"/>
</dbReference>
<dbReference type="InterPro" id="IPR038584">
    <property type="entry name" value="Ribosomal_bL33_sf"/>
</dbReference>
<dbReference type="InterPro" id="IPR011332">
    <property type="entry name" value="Ribosomal_zn-bd"/>
</dbReference>
<dbReference type="NCBIfam" id="NF001764">
    <property type="entry name" value="PRK00504.1"/>
    <property type="match status" value="1"/>
</dbReference>
<dbReference type="NCBIfam" id="NF001860">
    <property type="entry name" value="PRK00595.1"/>
    <property type="match status" value="1"/>
</dbReference>
<dbReference type="NCBIfam" id="TIGR01023">
    <property type="entry name" value="rpmG_bact"/>
    <property type="match status" value="1"/>
</dbReference>
<dbReference type="PANTHER" id="PTHR43168">
    <property type="entry name" value="50S RIBOSOMAL PROTEIN L33, CHLOROPLASTIC"/>
    <property type="match status" value="1"/>
</dbReference>
<dbReference type="PANTHER" id="PTHR43168:SF2">
    <property type="entry name" value="LARGE RIBOSOMAL SUBUNIT PROTEIN BL33C"/>
    <property type="match status" value="1"/>
</dbReference>
<dbReference type="Pfam" id="PF00471">
    <property type="entry name" value="Ribosomal_L33"/>
    <property type="match status" value="1"/>
</dbReference>
<dbReference type="SUPFAM" id="SSF57829">
    <property type="entry name" value="Zn-binding ribosomal proteins"/>
    <property type="match status" value="1"/>
</dbReference>
<dbReference type="PROSITE" id="PS00582">
    <property type="entry name" value="RIBOSOMAL_L33"/>
    <property type="match status" value="1"/>
</dbReference>
<gene>
    <name evidence="1" type="primary">rpmG</name>
    <name type="ordered locus">BLD_1680</name>
</gene>
<proteinExistence type="inferred from homology"/>
<evidence type="ECO:0000255" key="1">
    <source>
        <dbReference type="HAMAP-Rule" id="MF_00294"/>
    </source>
</evidence>
<evidence type="ECO:0000305" key="2"/>
<reference key="1">
    <citation type="journal article" date="2008" name="BMC Genomics">
        <title>Comparative genomic analysis of the gut bacterium Bifidobacterium longum reveals loci susceptible to deletion during pure culture growth.</title>
        <authorList>
            <person name="Lee J.H."/>
            <person name="Karamychev V.N."/>
            <person name="Kozyavkin S.A."/>
            <person name="Mills D."/>
            <person name="Pavlov A.R."/>
            <person name="Pavlova N.V."/>
            <person name="Polouchine N.N."/>
            <person name="Richardson P.M."/>
            <person name="Shakhova V.V."/>
            <person name="Slesarev A.I."/>
            <person name="Weimer B."/>
            <person name="O'Sullivan D.J."/>
        </authorList>
    </citation>
    <scope>NUCLEOTIDE SEQUENCE [LARGE SCALE GENOMIC DNA]</scope>
    <source>
        <strain>DJO10A</strain>
    </source>
</reference>
<comment type="similarity">
    <text evidence="1">Belongs to the bacterial ribosomal protein bL33 family.</text>
</comment>
<accession>B3DPY6</accession>
<keyword id="KW-0687">Ribonucleoprotein</keyword>
<keyword id="KW-0689">Ribosomal protein</keyword>
<feature type="chain" id="PRO_0000356402" description="Large ribosomal subunit protein bL33">
    <location>
        <begin position="1"/>
        <end position="55"/>
    </location>
</feature>
<sequence>MAKSADIRPGITLACTECKERNYITTKNRRNTPDRLELKKFCPRCGKQTVHRETR</sequence>
<name>RL33_BIFLD</name>
<protein>
    <recommendedName>
        <fullName evidence="1">Large ribosomal subunit protein bL33</fullName>
    </recommendedName>
    <alternativeName>
        <fullName evidence="2">50S ribosomal protein L33</fullName>
    </alternativeName>
</protein>